<comment type="function">
    <text evidence="2 3 6 7">Component of the protein complex eIF4F, which is involved in the recognition of the mRNA cap, ATP-dependent unwinding of 5'-terminal secondary structure and recruitment of mRNA to the ribosome (By similarity). Recognizes and binds the 7-methylguanosine-containing mRNA cap during an early step in the initiation of protein synthesis and facilitates ribosome binding by inducing the unwinding of the mRNAs secondary structures (By similarity). Key component of recessive resistance to potyviruses (PubMed:16760413, PubMed:21073716).</text>
</comment>
<comment type="function">
    <text evidence="6 7">(Microbial infection) Susceptibility host factor required for viral infection by recruiting viral RNAs to the host ribosomal complex via an interaction with viral genome-linked protein (VPg).</text>
</comment>
<comment type="subunit">
    <text evidence="2">EIF4F is a multi-subunit complex, the composition of which varies with external and internal environmental conditions. It is composed of at least EIF4A, EIF4E and EIF4G. EIF4E is also known to interact with other partners. In higher plants two isoforms of EIF4F have been identified, named isoform EIF4F and isoform EIF(iso)4F. Isoform EIF4F has subunits p220 and p26, whereas isoform EIF(iso)4F has subunits p82 and p28.</text>
</comment>
<comment type="subunit">
    <text evidence="11 12">(Microbial infection) Interacts with viral genome-linked protein (VPg); this interaction is possible in susceptible hosts but impaired in resistant plants.</text>
</comment>
<comment type="subcellular location">
    <subcellularLocation>
        <location evidence="1">Cytoplasm</location>
    </subcellularLocation>
    <subcellularLocation>
        <location evidence="1">Nucleus</location>
    </subcellularLocation>
</comment>
<comment type="PTM">
    <text evidence="3">According to the redox status, the Cys-101-Cys-140 disulfide bridge may have a role in regulating protein function by affecting its ability to bind capped mRNA.</text>
</comment>
<comment type="disruption phenotype">
    <text evidence="6">(Microbial infection) Truncated protein associated with pvr6 resistance allele, correlates with resistance to pepper veinal mottle virus (PVMV), especially when associated with the pvr2(2) allele of eIF4E.</text>
</comment>
<comment type="miscellaneous">
    <text evidence="11 12">Displayed sequence is from cv. Florida VR2, cv. Yolo Y and cv. Yolo Wonder, cv. CDP06433, cv. CDP09688 and cv. Zunla-1, with allele pvr6(+) (haplotype C1), and correlates with susceptibility to pepper veinal mottle virus (PVMV).</text>
</comment>
<comment type="miscellaneous">
    <text evidence="7">Plants harboring specific haplotypes couples for eIF4E/eIF(iso)4E are resistant or tolerant to potyvirus such as potato virus Y (PVY).</text>
</comment>
<comment type="similarity">
    <text evidence="10">Belongs to the eukaryotic initiation factor 4E family.</text>
</comment>
<name>IFI4E_CAPAN</name>
<proteinExistence type="evidence at protein level"/>
<protein>
    <recommendedName>
        <fullName evidence="8 9">Eukaryotic translation initiation factor isoform 4E</fullName>
        <shortName evidence="8 9">eIF(iso)-4E</shortName>
        <shortName evidence="8 9">eIF(iso)4E</shortName>
    </recommendedName>
    <alternativeName>
        <fullName evidence="10">eIF-(iso)4F 25 kDa subunit</fullName>
    </alternativeName>
    <alternativeName>
        <fullName evidence="10">eIF-(iso)4F p28 subunit</fullName>
    </alternativeName>
    <alternativeName>
        <fullName evidence="10">mRNA cap-binding protein</fullName>
    </alternativeName>
</protein>
<sequence>MATEAPPPVDTTEVPPFTAAETAVKQPHKLERKWTFWFDNQSKPKQGAAWGSSLKKAYTFDTVEEFWSLYDQIFKPSKLTVNADFHLFKAGIEPKWEDPECANGGKWTVTSSRKANLETMWLETLMALVGEQFDDSEDICGVVASVRRSQDKLSLWTKTATNEAAQMGIGRKWKEIIDTEKISYSFHDDSKRERSAKSRYTV</sequence>
<evidence type="ECO:0000250" key="1">
    <source>
        <dbReference type="UniProtKB" id="A0A445AGS0"/>
    </source>
</evidence>
<evidence type="ECO:0000250" key="2">
    <source>
        <dbReference type="UniProtKB" id="O04663"/>
    </source>
</evidence>
<evidence type="ECO:0000250" key="3">
    <source>
        <dbReference type="UniProtKB" id="P29557"/>
    </source>
</evidence>
<evidence type="ECO:0000250" key="4">
    <source>
        <dbReference type="UniProtKB" id="Q00LS8"/>
    </source>
</evidence>
<evidence type="ECO:0000256" key="5">
    <source>
        <dbReference type="SAM" id="MobiDB-lite"/>
    </source>
</evidence>
<evidence type="ECO:0000269" key="6">
    <source>
    </source>
</evidence>
<evidence type="ECO:0000269" key="7">
    <source>
    </source>
</evidence>
<evidence type="ECO:0000303" key="8">
    <source>
    </source>
</evidence>
<evidence type="ECO:0000303" key="9">
    <source>
    </source>
</evidence>
<evidence type="ECO:0000305" key="10"/>
<evidence type="ECO:0000305" key="11">
    <source>
    </source>
</evidence>
<evidence type="ECO:0000305" key="12">
    <source>
    </source>
</evidence>
<dbReference type="EMBL" id="DQ022080">
    <property type="protein sequence ID" value="AAY62607.1"/>
    <property type="molecule type" value="mRNA"/>
</dbReference>
<dbReference type="EMBL" id="DQ022081">
    <property type="protein sequence ID" value="AAY62608.1"/>
    <property type="molecule type" value="mRNA"/>
</dbReference>
<dbReference type="EMBL" id="DQ022082">
    <property type="protein sequence ID" value="AAY62609.1"/>
    <property type="molecule type" value="mRNA"/>
</dbReference>
<dbReference type="EMBL" id="FN824349">
    <property type="protein sequence ID" value="CBL94685.1"/>
    <property type="molecule type" value="mRNA"/>
</dbReference>
<dbReference type="EMBL" id="FN824356">
    <property type="protein sequence ID" value="CBL94692.1"/>
    <property type="molecule type" value="mRNA"/>
</dbReference>
<dbReference type="EMBL" id="FN824364">
    <property type="protein sequence ID" value="CBL94700.1"/>
    <property type="molecule type" value="mRNA"/>
</dbReference>
<dbReference type="RefSeq" id="NP_001311631.1">
    <property type="nucleotide sequence ID" value="NM_001324702.1"/>
</dbReference>
<dbReference type="RefSeq" id="XP_016554036.1">
    <property type="nucleotide sequence ID" value="XM_016698550.1"/>
</dbReference>
<dbReference type="SMR" id="A0A1U8F5V2"/>
<dbReference type="GeneID" id="107853558"/>
<dbReference type="KEGG" id="cann:107853558"/>
<dbReference type="OrthoDB" id="590761at2759"/>
<dbReference type="GO" id="GO:0005737">
    <property type="term" value="C:cytoplasm"/>
    <property type="evidence" value="ECO:0007669"/>
    <property type="project" value="UniProtKB-SubCell"/>
</dbReference>
<dbReference type="GO" id="GO:0005634">
    <property type="term" value="C:nucleus"/>
    <property type="evidence" value="ECO:0007669"/>
    <property type="project" value="UniProtKB-SubCell"/>
</dbReference>
<dbReference type="GO" id="GO:0003723">
    <property type="term" value="F:RNA binding"/>
    <property type="evidence" value="ECO:0007669"/>
    <property type="project" value="UniProtKB-KW"/>
</dbReference>
<dbReference type="GO" id="GO:0003743">
    <property type="term" value="F:translation initiation factor activity"/>
    <property type="evidence" value="ECO:0007669"/>
    <property type="project" value="UniProtKB-KW"/>
</dbReference>
<dbReference type="GO" id="GO:0006417">
    <property type="term" value="P:regulation of translation"/>
    <property type="evidence" value="ECO:0007669"/>
    <property type="project" value="UniProtKB-KW"/>
</dbReference>
<dbReference type="GO" id="GO:0009615">
    <property type="term" value="P:response to virus"/>
    <property type="evidence" value="ECO:0007669"/>
    <property type="project" value="UniProtKB-ARBA"/>
</dbReference>
<dbReference type="FunFam" id="3.30.760.10:FF:000003">
    <property type="entry name" value="Eukaryotic translation initiation factor 4E"/>
    <property type="match status" value="1"/>
</dbReference>
<dbReference type="Gene3D" id="3.30.760.10">
    <property type="entry name" value="RNA Cap, Translation Initiation Factor Eif4e"/>
    <property type="match status" value="1"/>
</dbReference>
<dbReference type="InterPro" id="IPR023398">
    <property type="entry name" value="TIF_eIF4e-like"/>
</dbReference>
<dbReference type="InterPro" id="IPR001040">
    <property type="entry name" value="TIF_eIF_4E"/>
</dbReference>
<dbReference type="InterPro" id="IPR019770">
    <property type="entry name" value="TIF_eIF_4E_CS"/>
</dbReference>
<dbReference type="PANTHER" id="PTHR11960">
    <property type="entry name" value="EUKARYOTIC TRANSLATION INITIATION FACTOR 4E RELATED"/>
    <property type="match status" value="1"/>
</dbReference>
<dbReference type="PANTHER" id="PTHR11960:SF60">
    <property type="entry name" value="EUKARYOTIC TRANSLATION INITIATION FACTOR ISOFORM 4E-2"/>
    <property type="match status" value="1"/>
</dbReference>
<dbReference type="Pfam" id="PF01652">
    <property type="entry name" value="IF4E"/>
    <property type="match status" value="1"/>
</dbReference>
<dbReference type="SUPFAM" id="SSF55418">
    <property type="entry name" value="eIF4e-like"/>
    <property type="match status" value="1"/>
</dbReference>
<dbReference type="PROSITE" id="PS00813">
    <property type="entry name" value="IF4E"/>
    <property type="match status" value="1"/>
</dbReference>
<feature type="chain" id="PRO_0000454077" description="Eukaryotic translation initiation factor isoform 4E">
    <location>
        <begin position="1"/>
        <end position="202"/>
    </location>
</feature>
<feature type="region of interest" description="Disordered" evidence="5">
    <location>
        <begin position="1"/>
        <end position="24"/>
    </location>
</feature>
<feature type="binding site" evidence="3">
    <location>
        <begin position="46"/>
        <end position="51"/>
    </location>
    <ligand>
        <name>mRNA</name>
        <dbReference type="ChEBI" id="CHEBI:33699"/>
    </ligand>
    <ligandPart>
        <name>N(7)-methylguanosine 5'-triphosphate group</name>
        <dbReference type="ChEBI" id="CHEBI:74429"/>
        <note>m7GTP residue in mRNA cap</note>
    </ligandPart>
</feature>
<feature type="binding site" evidence="3">
    <location>
        <position position="78"/>
    </location>
    <ligand>
        <name>mRNA</name>
        <dbReference type="ChEBI" id="CHEBI:33699"/>
    </ligand>
    <ligandPart>
        <name>N(7)-methylguanosine 5'-triphosphate group</name>
        <dbReference type="ChEBI" id="CHEBI:74429"/>
        <note>m7GTP residue in mRNA cap</note>
    </ligandPart>
</feature>
<feature type="binding site" evidence="3">
    <location>
        <begin position="96"/>
        <end position="97"/>
    </location>
    <ligand>
        <name>mRNA</name>
        <dbReference type="ChEBI" id="CHEBI:33699"/>
    </ligand>
    <ligandPart>
        <name>N(7)-methylguanosine 5'-triphosphate group</name>
        <dbReference type="ChEBI" id="CHEBI:74429"/>
        <note>m7GTP residue in mRNA cap</note>
    </ligandPart>
</feature>
<feature type="binding site" evidence="3">
    <location>
        <begin position="147"/>
        <end position="152"/>
    </location>
    <ligand>
        <name>mRNA</name>
        <dbReference type="ChEBI" id="CHEBI:33699"/>
    </ligand>
    <ligandPart>
        <name>N(7)-methylguanosine 5'-triphosphate group</name>
        <dbReference type="ChEBI" id="CHEBI:74429"/>
        <note>m7GTP residue in mRNA cap</note>
    </ligandPart>
</feature>
<feature type="binding site" evidence="4">
    <location>
        <begin position="191"/>
        <end position="194"/>
    </location>
    <ligand>
        <name>mRNA</name>
        <dbReference type="ChEBI" id="CHEBI:33699"/>
    </ligand>
    <ligandPart>
        <name>N(7)-methylguanosine 5'-triphosphate group</name>
        <dbReference type="ChEBI" id="CHEBI:74429"/>
        <note>m7GTP residue in mRNA cap</note>
    </ligandPart>
</feature>
<feature type="disulfide bond" evidence="3">
    <location>
        <begin position="101"/>
        <end position="140"/>
    </location>
</feature>
<feature type="sequence variant" description="In haplotype K1, allele pvr6(8)." evidence="7">
    <original>P</original>
    <variation>T</variation>
    <location>
        <position position="15"/>
    </location>
</feature>
<feature type="sequence variant" description="In haplotype F1, allele pvr6(6)." evidence="7">
    <original>P</original>
    <variation>T</variation>
    <location>
        <position position="16"/>
    </location>
</feature>
<feature type="sequence variant" description="In haplotypes G1 and G2, allele pvr6(9). In haplotype E1, allele pvr6(5). In haplotype H1, allele pvr6(7). In haplotype Ih1." evidence="7">
    <original>A</original>
    <variation>E</variation>
    <location>
        <position position="20"/>
    </location>
</feature>
<feature type="sequence variant" description="In haplotype A1, allele pvr6(2)." evidence="7">
    <original>A</original>
    <variation>T</variation>
    <location>
        <position position="20"/>
    </location>
</feature>
<feature type="sequence variant" description="In haplotypes G1 and G2, allele pvr6(9). In haplotype H1, allele pvr6(7)." evidence="7">
    <original>V</original>
    <variation>A</variation>
    <location>
        <position position="24"/>
    </location>
</feature>
<feature type="sequence variant" description="In haplotype K1, allele pvr6(8)." evidence="7">
    <original>V</original>
    <variation>E</variation>
    <location>
        <position position="24"/>
    </location>
</feature>
<feature type="sequence variant" description="In haplotype Ih1." evidence="7">
    <original>V</original>
    <variation>S</variation>
    <location>
        <position position="24"/>
    </location>
</feature>
<feature type="sequence variant" description="In haplotype B1, allele pvr6(3)." evidence="7">
    <original>P</original>
    <variation>S</variation>
    <location>
        <position position="27"/>
    </location>
</feature>
<feature type="sequence variant" description="In haplotype K1, allele pvr6(8)." evidence="7">
    <original>K</original>
    <variation>N</variation>
    <location>
        <position position="56"/>
    </location>
</feature>
<feature type="sequence variant" description="In haplotype H1, allele pvr6(7). In haplotype Ih1." evidence="7">
    <original>V</original>
    <variation>I</variation>
    <location>
        <position position="63"/>
    </location>
</feature>
<feature type="sequence variant" description="In strain: cv. CDP01246; haplotype D1, allele pvr6(4). In haplotype B1, allele pvr6(3)." evidence="7">
    <original>A</original>
    <variation>T</variation>
    <location>
        <position position="90"/>
    </location>
</feature>
<feature type="sequence variant" description="In haplotype K1, allele pvr6(8)." evidence="7">
    <original>A</original>
    <variation>P</variation>
    <location>
        <position position="115"/>
    </location>
</feature>
<feature type="sequence variant" description="In haplotype E1, allele pvr6(5)." evidence="7">
    <original>T</original>
    <variation>I</variation>
    <location>
        <position position="119"/>
    </location>
</feature>
<organism>
    <name type="scientific">Capsicum annuum</name>
    <name type="common">Capsicum pepper</name>
    <dbReference type="NCBI Taxonomy" id="4072"/>
    <lineage>
        <taxon>Eukaryota</taxon>
        <taxon>Viridiplantae</taxon>
        <taxon>Streptophyta</taxon>
        <taxon>Embryophyta</taxon>
        <taxon>Tracheophyta</taxon>
        <taxon>Spermatophyta</taxon>
        <taxon>Magnoliopsida</taxon>
        <taxon>eudicotyledons</taxon>
        <taxon>Gunneridae</taxon>
        <taxon>Pentapetalae</taxon>
        <taxon>asterids</taxon>
        <taxon>lamiids</taxon>
        <taxon>Solanales</taxon>
        <taxon>Solanaceae</taxon>
        <taxon>Solanoideae</taxon>
        <taxon>Capsiceae</taxon>
        <taxon>Capsicum</taxon>
    </lineage>
</organism>
<reference key="1">
    <citation type="journal article" date="2006" name="J. Gen. Virol.">
        <title>Simultaneous mutations in translation initiation factors eIF4E and eIF(iso)4E are required to prevent pepper veinal mottle virus infection of pepper.</title>
        <authorList>
            <person name="Ruffel S."/>
            <person name="Gallois J.-L."/>
            <person name="Moury B."/>
            <person name="Robaglia C."/>
            <person name="Palloix A."/>
            <person name="Caranta C."/>
        </authorList>
    </citation>
    <scope>NUCLEOTIDE SEQUENCE [MRNA]</scope>
    <scope>FUNCTION</scope>
    <scope>FUNCTION (MICROBIAL INFECTION)</scope>
    <scope>DISRUPTION PHENOTYPE (MICROBIAL INFECTION)</scope>
    <scope>SUBUNIT (MICROBIAL INFECTION)</scope>
    <source>
        <strain>cv. Florida VR2</strain>
        <strain>cv. Yolo Wonder</strain>
        <strain>cv. Yolo Y</strain>
    </source>
</reference>
<reference key="2">
    <citation type="journal article" date="2014" name="Proc. Natl. Acad. Sci. U.S.A.">
        <title>Whole-genome sequencing of cultivated and wild peppers provides insights into Capsicum domestication and specialization.</title>
        <authorList>
            <person name="Qin C."/>
            <person name="Yu C."/>
            <person name="Shen Y."/>
            <person name="Fang X."/>
            <person name="Chen L."/>
            <person name="Min J."/>
            <person name="Cheng J."/>
            <person name="Zhao S."/>
            <person name="Xu M."/>
            <person name="Luo Y."/>
            <person name="Yang Y."/>
            <person name="Wu Z."/>
            <person name="Mao L."/>
            <person name="Wu H."/>
            <person name="Ling-Hu C."/>
            <person name="Zhou H."/>
            <person name="Lin H."/>
            <person name="Gonzalez-Morales S."/>
            <person name="Trejo-Saavedra D.L."/>
            <person name="Tian H."/>
            <person name="Tang X."/>
            <person name="Zhao M."/>
            <person name="Huang Z."/>
            <person name="Zhou A."/>
            <person name="Yao X."/>
            <person name="Cui J."/>
            <person name="Li W."/>
            <person name="Chen Z."/>
            <person name="Feng Y."/>
            <person name="Niu Y."/>
            <person name="Bi S."/>
            <person name="Yang X."/>
            <person name="Li W."/>
            <person name="Cai H."/>
            <person name="Luo X."/>
            <person name="Montes-Hernandez S."/>
            <person name="Leyva-Gonzalez M.A."/>
            <person name="Xiong Z."/>
            <person name="He X."/>
            <person name="Bai L."/>
            <person name="Tan S."/>
            <person name="Tang X."/>
            <person name="Liu D."/>
            <person name="Liu J."/>
            <person name="Zhang S."/>
            <person name="Chen M."/>
            <person name="Zhang L."/>
            <person name="Zhang L."/>
            <person name="Zhang Y."/>
            <person name="Liao W."/>
            <person name="Zhang Y."/>
            <person name="Wang M."/>
            <person name="Lv X."/>
            <person name="Wen B."/>
            <person name="Liu H."/>
            <person name="Luan H."/>
            <person name="Zhang Y."/>
            <person name="Yang S."/>
            <person name="Wang X."/>
            <person name="Xu J."/>
            <person name="Li X."/>
            <person name="Li S."/>
            <person name="Wang J."/>
            <person name="Palloix A."/>
            <person name="Bosland P.W."/>
            <person name="Li Y."/>
            <person name="Krogh A."/>
            <person name="Rivera-Bustamante R.F."/>
            <person name="Herrera-Estrella L."/>
            <person name="Yin Y."/>
            <person name="Yu J."/>
            <person name="Hu K."/>
            <person name="Zhang Z."/>
        </authorList>
    </citation>
    <scope>NUCLEOTIDE SEQUENCE [LARGE SCALE GENOMIC DNA]</scope>
    <source>
        <strain>cv. Zunla-1</strain>
    </source>
</reference>
<reference key="3">
    <citation type="journal article" date="2010" name="BMC Genomics">
        <title>EcoTILLING in Capsicum species: searching for new virus resistances.</title>
        <authorList>
            <person name="Ibiza V.P."/>
            <person name="Canizares J."/>
            <person name="Nuez F."/>
        </authorList>
    </citation>
    <scope>NUCLEOTIDE SEQUENCE [MRNA] OF 5-202</scope>
    <scope>FUNCTION</scope>
    <scope>FUNCTION (MICROBIAL INFECTION)</scope>
    <scope>VARIANTS THR-15; THR-16; GLU-20; THR-20; ALA-24; GLU-24; SER-24; SER-27; ASN-56; ILE-63; THR-90; PRO-115 AND ILE-119</scope>
    <scope>SUBUNIT (MICROBIAL INFECTION)</scope>
    <source>
        <strain>cv. CDP01246</strain>
        <strain>cv. CDP06433</strain>
        <strain>cv. CDP09688</strain>
        <tissue>Leaf</tissue>
    </source>
</reference>
<keyword id="KW-0963">Cytoplasm</keyword>
<keyword id="KW-1015">Disulfide bond</keyword>
<keyword id="KW-0396">Initiation factor</keyword>
<keyword id="KW-0539">Nucleus</keyword>
<keyword id="KW-0648">Protein biosynthesis</keyword>
<keyword id="KW-0694">RNA-binding</keyword>
<keyword id="KW-0810">Translation regulation</keyword>
<accession>A0A1U8F5V2</accession>
<accession>I2FKT8</accession>
<accession>I2FKU5</accession>
<accession>I2FKV3</accession>
<accession>Q4PZB3</accession>
<gene>
    <name evidence="8 9" type="primary">eIFiso4E</name>
    <name type="ORF">LOC107853558</name>
</gene>